<comment type="function">
    <text evidence="1">Catalyzes the hydrolysis of N-succinyl-L,L-diaminopimelic acid (SDAP), forming succinate and LL-2,6-diaminopimelate (DAP), an intermediate involved in the bacterial biosynthesis of lysine and meso-diaminopimelic acid, an essential component of bacterial cell walls.</text>
</comment>
<comment type="catalytic activity">
    <reaction evidence="1">
        <text>N-succinyl-(2S,6S)-2,6-diaminopimelate + H2O = (2S,6S)-2,6-diaminopimelate + succinate</text>
        <dbReference type="Rhea" id="RHEA:22608"/>
        <dbReference type="ChEBI" id="CHEBI:15377"/>
        <dbReference type="ChEBI" id="CHEBI:30031"/>
        <dbReference type="ChEBI" id="CHEBI:57609"/>
        <dbReference type="ChEBI" id="CHEBI:58087"/>
        <dbReference type="EC" id="3.5.1.18"/>
    </reaction>
</comment>
<comment type="cofactor">
    <cofactor evidence="1">
        <name>Zn(2+)</name>
        <dbReference type="ChEBI" id="CHEBI:29105"/>
    </cofactor>
    <cofactor evidence="1">
        <name>Co(2+)</name>
        <dbReference type="ChEBI" id="CHEBI:48828"/>
    </cofactor>
    <text evidence="1">Binds 2 Zn(2+) or Co(2+) ions per subunit.</text>
</comment>
<comment type="pathway">
    <text evidence="1">Amino-acid biosynthesis; L-lysine biosynthesis via DAP pathway; LL-2,6-diaminopimelate from (S)-tetrahydrodipicolinate (succinylase route): step 3/3.</text>
</comment>
<comment type="subunit">
    <text evidence="1">Homodimer.</text>
</comment>
<comment type="similarity">
    <text evidence="1">Belongs to the peptidase M20A family. DapE subfamily.</text>
</comment>
<organism>
    <name type="scientific">Alkalilimnicola ehrlichii (strain ATCC BAA-1101 / DSM 17681 / MLHE-1)</name>
    <dbReference type="NCBI Taxonomy" id="187272"/>
    <lineage>
        <taxon>Bacteria</taxon>
        <taxon>Pseudomonadati</taxon>
        <taxon>Pseudomonadota</taxon>
        <taxon>Gammaproteobacteria</taxon>
        <taxon>Chromatiales</taxon>
        <taxon>Ectothiorhodospiraceae</taxon>
        <taxon>Alkalilimnicola</taxon>
    </lineage>
</organism>
<dbReference type="EC" id="3.5.1.18" evidence="1"/>
<dbReference type="EMBL" id="CP000453">
    <property type="protein sequence ID" value="ABI57212.1"/>
    <property type="molecule type" value="Genomic_DNA"/>
</dbReference>
<dbReference type="RefSeq" id="WP_011629606.1">
    <property type="nucleotide sequence ID" value="NC_008340.1"/>
</dbReference>
<dbReference type="SMR" id="Q0A7H5"/>
<dbReference type="KEGG" id="aeh:Mlg_1868"/>
<dbReference type="eggNOG" id="COG0624">
    <property type="taxonomic scope" value="Bacteria"/>
</dbReference>
<dbReference type="HOGENOM" id="CLU_021802_4_0_6"/>
<dbReference type="OrthoDB" id="9809784at2"/>
<dbReference type="UniPathway" id="UPA00034">
    <property type="reaction ID" value="UER00021"/>
</dbReference>
<dbReference type="Proteomes" id="UP000001962">
    <property type="component" value="Chromosome"/>
</dbReference>
<dbReference type="GO" id="GO:0008777">
    <property type="term" value="F:acetylornithine deacetylase activity"/>
    <property type="evidence" value="ECO:0007669"/>
    <property type="project" value="TreeGrafter"/>
</dbReference>
<dbReference type="GO" id="GO:0050897">
    <property type="term" value="F:cobalt ion binding"/>
    <property type="evidence" value="ECO:0007669"/>
    <property type="project" value="UniProtKB-UniRule"/>
</dbReference>
<dbReference type="GO" id="GO:0009014">
    <property type="term" value="F:succinyl-diaminopimelate desuccinylase activity"/>
    <property type="evidence" value="ECO:0007669"/>
    <property type="project" value="UniProtKB-UniRule"/>
</dbReference>
<dbReference type="GO" id="GO:0008270">
    <property type="term" value="F:zinc ion binding"/>
    <property type="evidence" value="ECO:0007669"/>
    <property type="project" value="UniProtKB-UniRule"/>
</dbReference>
<dbReference type="GO" id="GO:0019877">
    <property type="term" value="P:diaminopimelate biosynthetic process"/>
    <property type="evidence" value="ECO:0007669"/>
    <property type="project" value="UniProtKB-UniRule"/>
</dbReference>
<dbReference type="GO" id="GO:0006526">
    <property type="term" value="P:L-arginine biosynthetic process"/>
    <property type="evidence" value="ECO:0007669"/>
    <property type="project" value="TreeGrafter"/>
</dbReference>
<dbReference type="GO" id="GO:0009089">
    <property type="term" value="P:lysine biosynthetic process via diaminopimelate"/>
    <property type="evidence" value="ECO:0007669"/>
    <property type="project" value="UniProtKB-UniRule"/>
</dbReference>
<dbReference type="CDD" id="cd03891">
    <property type="entry name" value="M20_DapE_proteobac"/>
    <property type="match status" value="1"/>
</dbReference>
<dbReference type="FunFam" id="3.30.70.360:FF:000011">
    <property type="entry name" value="Succinyl-diaminopimelate desuccinylase"/>
    <property type="match status" value="1"/>
</dbReference>
<dbReference type="FunFam" id="3.40.630.10:FF:000005">
    <property type="entry name" value="Succinyl-diaminopimelate desuccinylase"/>
    <property type="match status" value="1"/>
</dbReference>
<dbReference type="Gene3D" id="3.40.630.10">
    <property type="entry name" value="Zn peptidases"/>
    <property type="match status" value="2"/>
</dbReference>
<dbReference type="HAMAP" id="MF_01690">
    <property type="entry name" value="DapE"/>
    <property type="match status" value="1"/>
</dbReference>
<dbReference type="InterPro" id="IPR001261">
    <property type="entry name" value="ArgE/DapE_CS"/>
</dbReference>
<dbReference type="InterPro" id="IPR036264">
    <property type="entry name" value="Bact_exopeptidase_dim_dom"/>
</dbReference>
<dbReference type="InterPro" id="IPR005941">
    <property type="entry name" value="DapE_proteobac"/>
</dbReference>
<dbReference type="InterPro" id="IPR002933">
    <property type="entry name" value="Peptidase_M20"/>
</dbReference>
<dbReference type="InterPro" id="IPR011650">
    <property type="entry name" value="Peptidase_M20_dimer"/>
</dbReference>
<dbReference type="InterPro" id="IPR050072">
    <property type="entry name" value="Peptidase_M20A"/>
</dbReference>
<dbReference type="NCBIfam" id="TIGR01246">
    <property type="entry name" value="dapE_proteo"/>
    <property type="match status" value="1"/>
</dbReference>
<dbReference type="NCBIfam" id="NF009557">
    <property type="entry name" value="PRK13009.1"/>
    <property type="match status" value="1"/>
</dbReference>
<dbReference type="PANTHER" id="PTHR43808">
    <property type="entry name" value="ACETYLORNITHINE DEACETYLASE"/>
    <property type="match status" value="1"/>
</dbReference>
<dbReference type="PANTHER" id="PTHR43808:SF31">
    <property type="entry name" value="N-ACETYL-L-CITRULLINE DEACETYLASE"/>
    <property type="match status" value="1"/>
</dbReference>
<dbReference type="Pfam" id="PF07687">
    <property type="entry name" value="M20_dimer"/>
    <property type="match status" value="1"/>
</dbReference>
<dbReference type="Pfam" id="PF01546">
    <property type="entry name" value="Peptidase_M20"/>
    <property type="match status" value="1"/>
</dbReference>
<dbReference type="SUPFAM" id="SSF55031">
    <property type="entry name" value="Bacterial exopeptidase dimerisation domain"/>
    <property type="match status" value="1"/>
</dbReference>
<dbReference type="SUPFAM" id="SSF53187">
    <property type="entry name" value="Zn-dependent exopeptidases"/>
    <property type="match status" value="1"/>
</dbReference>
<dbReference type="PROSITE" id="PS00759">
    <property type="entry name" value="ARGE_DAPE_CPG2_2"/>
    <property type="match status" value="1"/>
</dbReference>
<evidence type="ECO:0000255" key="1">
    <source>
        <dbReference type="HAMAP-Rule" id="MF_01690"/>
    </source>
</evidence>
<reference key="1">
    <citation type="submission" date="2006-08" db="EMBL/GenBank/DDBJ databases">
        <title>Complete sequence of Alkalilimnicola ehrilichei MLHE-1.</title>
        <authorList>
            <person name="Copeland A."/>
            <person name="Lucas S."/>
            <person name="Lapidus A."/>
            <person name="Barry K."/>
            <person name="Detter J.C."/>
            <person name="Glavina del Rio T."/>
            <person name="Hammon N."/>
            <person name="Israni S."/>
            <person name="Dalin E."/>
            <person name="Tice H."/>
            <person name="Pitluck S."/>
            <person name="Sims D."/>
            <person name="Brettin T."/>
            <person name="Bruce D."/>
            <person name="Han C."/>
            <person name="Tapia R."/>
            <person name="Gilna P."/>
            <person name="Schmutz J."/>
            <person name="Larimer F."/>
            <person name="Land M."/>
            <person name="Hauser L."/>
            <person name="Kyrpides N."/>
            <person name="Mikhailova N."/>
            <person name="Oremland R.S."/>
            <person name="Hoeft S.E."/>
            <person name="Switzer-Blum J."/>
            <person name="Kulp T."/>
            <person name="King G."/>
            <person name="Tabita R."/>
            <person name="Witte B."/>
            <person name="Santini J.M."/>
            <person name="Basu P."/>
            <person name="Hollibaugh J.T."/>
            <person name="Xie G."/>
            <person name="Stolz J.F."/>
            <person name="Richardson P."/>
        </authorList>
    </citation>
    <scope>NUCLEOTIDE SEQUENCE [LARGE SCALE GENOMIC DNA]</scope>
    <source>
        <strain>ATCC BAA-1101 / DSM 17681 / MLHE-1</strain>
    </source>
</reference>
<accession>Q0A7H5</accession>
<proteinExistence type="inferred from homology"/>
<protein>
    <recommendedName>
        <fullName evidence="1">Succinyl-diaminopimelate desuccinylase</fullName>
        <shortName evidence="1">SDAP desuccinylase</shortName>
        <ecNumber evidence="1">3.5.1.18</ecNumber>
    </recommendedName>
    <alternativeName>
        <fullName evidence="1">N-succinyl-LL-2,6-diaminoheptanedioate amidohydrolase</fullName>
    </alternativeName>
</protein>
<gene>
    <name evidence="1" type="primary">dapE</name>
    <name type="ordered locus">Mlg_1868</name>
</gene>
<keyword id="KW-0028">Amino-acid biosynthesis</keyword>
<keyword id="KW-0170">Cobalt</keyword>
<keyword id="KW-0220">Diaminopimelate biosynthesis</keyword>
<keyword id="KW-0378">Hydrolase</keyword>
<keyword id="KW-0457">Lysine biosynthesis</keyword>
<keyword id="KW-0479">Metal-binding</keyword>
<keyword id="KW-1185">Reference proteome</keyword>
<keyword id="KW-0862">Zinc</keyword>
<name>DAPE_ALKEH</name>
<feature type="chain" id="PRO_0000375460" description="Succinyl-diaminopimelate desuccinylase">
    <location>
        <begin position="1"/>
        <end position="375"/>
    </location>
</feature>
<feature type="active site" evidence="1">
    <location>
        <position position="68"/>
    </location>
</feature>
<feature type="active site" description="Proton acceptor" evidence="1">
    <location>
        <position position="133"/>
    </location>
</feature>
<feature type="binding site" evidence="1">
    <location>
        <position position="66"/>
    </location>
    <ligand>
        <name>Zn(2+)</name>
        <dbReference type="ChEBI" id="CHEBI:29105"/>
        <label>1</label>
    </ligand>
</feature>
<feature type="binding site" evidence="1">
    <location>
        <position position="99"/>
    </location>
    <ligand>
        <name>Zn(2+)</name>
        <dbReference type="ChEBI" id="CHEBI:29105"/>
        <label>1</label>
    </ligand>
</feature>
<feature type="binding site" evidence="1">
    <location>
        <position position="99"/>
    </location>
    <ligand>
        <name>Zn(2+)</name>
        <dbReference type="ChEBI" id="CHEBI:29105"/>
        <label>2</label>
    </ligand>
</feature>
<feature type="binding site" evidence="1">
    <location>
        <position position="134"/>
    </location>
    <ligand>
        <name>Zn(2+)</name>
        <dbReference type="ChEBI" id="CHEBI:29105"/>
        <label>2</label>
    </ligand>
</feature>
<feature type="binding site" evidence="1">
    <location>
        <position position="162"/>
    </location>
    <ligand>
        <name>Zn(2+)</name>
        <dbReference type="ChEBI" id="CHEBI:29105"/>
        <label>1</label>
    </ligand>
</feature>
<feature type="binding site" evidence="1">
    <location>
        <position position="348"/>
    </location>
    <ligand>
        <name>Zn(2+)</name>
        <dbReference type="ChEBI" id="CHEBI:29105"/>
        <label>2</label>
    </ligand>
</feature>
<sequence length="375" mass="40529">MSETLELASALIARRSVTPMDAGCQQLLAERLRPLGFDCERLDYGEVNNLWARRGQQGPVFCFAGHTDVVPPGPEAQWRHPPFQPVVEQGLLYGRGAADMKGSVAAFVTALERYLAGGHRPRGSLALLITSDEEGPAVDGTRHVVETLSERGERIDWCLVGEPSSTERVGDVVKVGRRGSLNGRLTVRGDQGHVAYPHLARNPVHQALAALDELVTTRWDEGNDHFPPTSFQISNVQAGTGATNVIPGELEVTFNFRFSTEVTADELQQRVEAVLDRHGLDGRIDWSLSGEPFLTAEGELVAATQAAVRDVCGDPPVLSTSGGTSDGRFIAPTGAQVLELGPVNATIHKVNEHVRAADLDTLSRIYEGVLRRLLG</sequence>